<evidence type="ECO:0000255" key="1">
    <source>
        <dbReference type="HAMAP-Rule" id="MF_00625"/>
    </source>
</evidence>
<sequence>MNTLAPRLTDLAHGGGCGCKLAPSVLQQLLANQPAARPFAQLLVGNDMADDAAVWQVDDNTCVIATTDFFMPIVDDPRDFGRIAATNAISDVYAMGGKPILALAIVGMPINKLDSTTIAKILEGGASICAEAGIPVAGGHSIDSVEPIYGLAVIGLCHPSEVRRNGGVKAGDALILTKGIGVGIYSAAIKKNALPPGCYEEMIGSTTLLNRIGADLAADPDVHALTDVTGFGVLGHGLEMARASQLSLTLRLSAIPFLSQAYMLAEQGFITGASGRNWASYGADVVLPDDLPDWQRLLLADPQTSGGLLVACAPEKAGALVEKVRLAGYPLAGIVGTAAAGAAQIKVIS</sequence>
<name>SELD_RHIME</name>
<dbReference type="EC" id="2.7.9.3" evidence="1"/>
<dbReference type="EMBL" id="AE006469">
    <property type="protein sequence ID" value="AAK64672.1"/>
    <property type="molecule type" value="Genomic_DNA"/>
</dbReference>
<dbReference type="PIR" id="F95263">
    <property type="entry name" value="F95263"/>
</dbReference>
<dbReference type="RefSeq" id="NP_435260.1">
    <property type="nucleotide sequence ID" value="NC_003037.1"/>
</dbReference>
<dbReference type="RefSeq" id="WP_010967014.1">
    <property type="nucleotide sequence ID" value="NC_003037.1"/>
</dbReference>
<dbReference type="SMR" id="Q931D0"/>
<dbReference type="EnsemblBacteria" id="AAK64672">
    <property type="protein sequence ID" value="AAK64672"/>
    <property type="gene ID" value="SMa0028"/>
</dbReference>
<dbReference type="KEGG" id="sme:SMa0028"/>
<dbReference type="PATRIC" id="fig|266834.11.peg.14"/>
<dbReference type="HOGENOM" id="CLU_032859_0_1_5"/>
<dbReference type="OrthoDB" id="9767928at2"/>
<dbReference type="Proteomes" id="UP000001976">
    <property type="component" value="Plasmid pSymA"/>
</dbReference>
<dbReference type="GO" id="GO:0005737">
    <property type="term" value="C:cytoplasm"/>
    <property type="evidence" value="ECO:0007669"/>
    <property type="project" value="TreeGrafter"/>
</dbReference>
<dbReference type="GO" id="GO:0005524">
    <property type="term" value="F:ATP binding"/>
    <property type="evidence" value="ECO:0007669"/>
    <property type="project" value="UniProtKB-UniRule"/>
</dbReference>
<dbReference type="GO" id="GO:0000287">
    <property type="term" value="F:magnesium ion binding"/>
    <property type="evidence" value="ECO:0007669"/>
    <property type="project" value="UniProtKB-UniRule"/>
</dbReference>
<dbReference type="GO" id="GO:0004756">
    <property type="term" value="F:selenide, water dikinase activity"/>
    <property type="evidence" value="ECO:0007669"/>
    <property type="project" value="UniProtKB-UniRule"/>
</dbReference>
<dbReference type="GO" id="GO:0016260">
    <property type="term" value="P:selenocysteine biosynthetic process"/>
    <property type="evidence" value="ECO:0007669"/>
    <property type="project" value="InterPro"/>
</dbReference>
<dbReference type="CDD" id="cd02195">
    <property type="entry name" value="SelD"/>
    <property type="match status" value="1"/>
</dbReference>
<dbReference type="FunFam" id="3.30.1330.10:FF:000003">
    <property type="entry name" value="Selenide, water dikinase"/>
    <property type="match status" value="1"/>
</dbReference>
<dbReference type="Gene3D" id="3.90.650.10">
    <property type="entry name" value="PurM-like C-terminal domain"/>
    <property type="match status" value="1"/>
</dbReference>
<dbReference type="Gene3D" id="3.30.1330.10">
    <property type="entry name" value="PurM-like, N-terminal domain"/>
    <property type="match status" value="1"/>
</dbReference>
<dbReference type="HAMAP" id="MF_00625">
    <property type="entry name" value="SelD"/>
    <property type="match status" value="1"/>
</dbReference>
<dbReference type="InterPro" id="IPR010918">
    <property type="entry name" value="PurM-like_C_dom"/>
</dbReference>
<dbReference type="InterPro" id="IPR036676">
    <property type="entry name" value="PurM-like_C_sf"/>
</dbReference>
<dbReference type="InterPro" id="IPR016188">
    <property type="entry name" value="PurM-like_N"/>
</dbReference>
<dbReference type="InterPro" id="IPR036921">
    <property type="entry name" value="PurM-like_N_sf"/>
</dbReference>
<dbReference type="InterPro" id="IPR023061">
    <property type="entry name" value="SelD_I"/>
</dbReference>
<dbReference type="InterPro" id="IPR004536">
    <property type="entry name" value="SPS/SelD"/>
</dbReference>
<dbReference type="NCBIfam" id="NF002098">
    <property type="entry name" value="PRK00943.1"/>
    <property type="match status" value="1"/>
</dbReference>
<dbReference type="NCBIfam" id="TIGR00476">
    <property type="entry name" value="selD"/>
    <property type="match status" value="1"/>
</dbReference>
<dbReference type="PANTHER" id="PTHR10256:SF0">
    <property type="entry name" value="INACTIVE SELENIDE, WATER DIKINASE-LIKE PROTEIN-RELATED"/>
    <property type="match status" value="1"/>
</dbReference>
<dbReference type="PANTHER" id="PTHR10256">
    <property type="entry name" value="SELENIDE, WATER DIKINASE"/>
    <property type="match status" value="1"/>
</dbReference>
<dbReference type="Pfam" id="PF00586">
    <property type="entry name" value="AIRS"/>
    <property type="match status" value="1"/>
</dbReference>
<dbReference type="Pfam" id="PF02769">
    <property type="entry name" value="AIRS_C"/>
    <property type="match status" value="1"/>
</dbReference>
<dbReference type="PIRSF" id="PIRSF036407">
    <property type="entry name" value="Selenphspht_syn"/>
    <property type="match status" value="1"/>
</dbReference>
<dbReference type="SUPFAM" id="SSF56042">
    <property type="entry name" value="PurM C-terminal domain-like"/>
    <property type="match status" value="1"/>
</dbReference>
<dbReference type="SUPFAM" id="SSF55326">
    <property type="entry name" value="PurM N-terminal domain-like"/>
    <property type="match status" value="1"/>
</dbReference>
<keyword id="KW-0067">ATP-binding</keyword>
<keyword id="KW-0418">Kinase</keyword>
<keyword id="KW-0460">Magnesium</keyword>
<keyword id="KW-0479">Metal-binding</keyword>
<keyword id="KW-0547">Nucleotide-binding</keyword>
<keyword id="KW-0614">Plasmid</keyword>
<keyword id="KW-1185">Reference proteome</keyword>
<keyword id="KW-0711">Selenium</keyword>
<keyword id="KW-0808">Transferase</keyword>
<accession>Q931D0</accession>
<proteinExistence type="inferred from homology"/>
<organism>
    <name type="scientific">Rhizobium meliloti (strain 1021)</name>
    <name type="common">Ensifer meliloti</name>
    <name type="synonym">Sinorhizobium meliloti</name>
    <dbReference type="NCBI Taxonomy" id="266834"/>
    <lineage>
        <taxon>Bacteria</taxon>
        <taxon>Pseudomonadati</taxon>
        <taxon>Pseudomonadota</taxon>
        <taxon>Alphaproteobacteria</taxon>
        <taxon>Hyphomicrobiales</taxon>
        <taxon>Rhizobiaceae</taxon>
        <taxon>Sinorhizobium/Ensifer group</taxon>
        <taxon>Sinorhizobium</taxon>
    </lineage>
</organism>
<feature type="chain" id="PRO_0000127636" description="Selenide, water dikinase">
    <location>
        <begin position="1"/>
        <end position="349"/>
    </location>
</feature>
<feature type="active site" evidence="1">
    <location>
        <position position="17"/>
    </location>
</feature>
<feature type="binding site" description="in other chain" evidence="1">
    <location>
        <position position="20"/>
    </location>
    <ligand>
        <name>ATP</name>
        <dbReference type="ChEBI" id="CHEBI:30616"/>
        <note>ligand shared between dimeric partners</note>
    </ligand>
</feature>
<feature type="binding site" description="in other chain" evidence="1">
    <location>
        <begin position="48"/>
        <end position="50"/>
    </location>
    <ligand>
        <name>ATP</name>
        <dbReference type="ChEBI" id="CHEBI:30616"/>
        <note>ligand shared between dimeric partners</note>
    </ligand>
</feature>
<feature type="binding site" evidence="1">
    <location>
        <position position="51"/>
    </location>
    <ligand>
        <name>Mg(2+)</name>
        <dbReference type="ChEBI" id="CHEBI:18420"/>
    </ligand>
</feature>
<feature type="binding site" description="in other chain" evidence="1">
    <location>
        <position position="68"/>
    </location>
    <ligand>
        <name>ATP</name>
        <dbReference type="ChEBI" id="CHEBI:30616"/>
        <note>ligand shared between dimeric partners</note>
    </ligand>
</feature>
<feature type="binding site" description="in other chain" evidence="1">
    <location>
        <position position="91"/>
    </location>
    <ligand>
        <name>ATP</name>
        <dbReference type="ChEBI" id="CHEBI:30616"/>
        <note>ligand shared between dimeric partners</note>
    </ligand>
</feature>
<feature type="binding site" evidence="1">
    <location>
        <position position="91"/>
    </location>
    <ligand>
        <name>Mg(2+)</name>
        <dbReference type="ChEBI" id="CHEBI:18420"/>
    </ligand>
</feature>
<feature type="binding site" evidence="1">
    <location>
        <begin position="139"/>
        <end position="141"/>
    </location>
    <ligand>
        <name>ATP</name>
        <dbReference type="ChEBI" id="CHEBI:30616"/>
        <note>ligand shared between dimeric partners</note>
    </ligand>
</feature>
<feature type="binding site" evidence="1">
    <location>
        <position position="227"/>
    </location>
    <ligand>
        <name>Mg(2+)</name>
        <dbReference type="ChEBI" id="CHEBI:18420"/>
    </ligand>
</feature>
<feature type="site" description="Important for catalytic activity" evidence="1">
    <location>
        <position position="20"/>
    </location>
</feature>
<protein>
    <recommendedName>
        <fullName evidence="1">Selenide, water dikinase</fullName>
        <ecNumber evidence="1">2.7.9.3</ecNumber>
    </recommendedName>
    <alternativeName>
        <fullName evidence="1">Selenium donor protein</fullName>
    </alternativeName>
    <alternativeName>
        <fullName evidence="1">Selenophosphate synthase</fullName>
    </alternativeName>
</protein>
<reference key="1">
    <citation type="journal article" date="2001" name="Proc. Natl. Acad. Sci. U.S.A.">
        <title>Nucleotide sequence and predicted functions of the entire Sinorhizobium meliloti pSymA megaplasmid.</title>
        <authorList>
            <person name="Barnett M.J."/>
            <person name="Fisher R.F."/>
            <person name="Jones T."/>
            <person name="Komp C."/>
            <person name="Abola A.P."/>
            <person name="Barloy-Hubler F."/>
            <person name="Bowser L."/>
            <person name="Capela D."/>
            <person name="Galibert F."/>
            <person name="Gouzy J."/>
            <person name="Gurjal M."/>
            <person name="Hong A."/>
            <person name="Huizar L."/>
            <person name="Hyman R.W."/>
            <person name="Kahn D."/>
            <person name="Kahn M.L."/>
            <person name="Kalman S."/>
            <person name="Keating D.H."/>
            <person name="Palm C."/>
            <person name="Peck M.C."/>
            <person name="Surzycki R."/>
            <person name="Wells D.H."/>
            <person name="Yeh K.-C."/>
            <person name="Davis R.W."/>
            <person name="Federspiel N.A."/>
            <person name="Long S.R."/>
        </authorList>
    </citation>
    <scope>NUCLEOTIDE SEQUENCE [LARGE SCALE GENOMIC DNA]</scope>
    <source>
        <strain>1021</strain>
    </source>
</reference>
<reference key="2">
    <citation type="journal article" date="2001" name="Science">
        <title>The composite genome of the legume symbiont Sinorhizobium meliloti.</title>
        <authorList>
            <person name="Galibert F."/>
            <person name="Finan T.M."/>
            <person name="Long S.R."/>
            <person name="Puehler A."/>
            <person name="Abola P."/>
            <person name="Ampe F."/>
            <person name="Barloy-Hubler F."/>
            <person name="Barnett M.J."/>
            <person name="Becker A."/>
            <person name="Boistard P."/>
            <person name="Bothe G."/>
            <person name="Boutry M."/>
            <person name="Bowser L."/>
            <person name="Buhrmester J."/>
            <person name="Cadieu E."/>
            <person name="Capela D."/>
            <person name="Chain P."/>
            <person name="Cowie A."/>
            <person name="Davis R.W."/>
            <person name="Dreano S."/>
            <person name="Federspiel N.A."/>
            <person name="Fisher R.F."/>
            <person name="Gloux S."/>
            <person name="Godrie T."/>
            <person name="Goffeau A."/>
            <person name="Golding B."/>
            <person name="Gouzy J."/>
            <person name="Gurjal M."/>
            <person name="Hernandez-Lucas I."/>
            <person name="Hong A."/>
            <person name="Huizar L."/>
            <person name="Hyman R.W."/>
            <person name="Jones T."/>
            <person name="Kahn D."/>
            <person name="Kahn M.L."/>
            <person name="Kalman S."/>
            <person name="Keating D.H."/>
            <person name="Kiss E."/>
            <person name="Komp C."/>
            <person name="Lelaure V."/>
            <person name="Masuy D."/>
            <person name="Palm C."/>
            <person name="Peck M.C."/>
            <person name="Pohl T.M."/>
            <person name="Portetelle D."/>
            <person name="Purnelle B."/>
            <person name="Ramsperger U."/>
            <person name="Surzycki R."/>
            <person name="Thebault P."/>
            <person name="Vandenbol M."/>
            <person name="Vorhoelter F.J."/>
            <person name="Weidner S."/>
            <person name="Wells D.H."/>
            <person name="Wong K."/>
            <person name="Yeh K.-C."/>
            <person name="Batut J."/>
        </authorList>
    </citation>
    <scope>NUCLEOTIDE SEQUENCE [LARGE SCALE GENOMIC DNA]</scope>
    <source>
        <strain>1021</strain>
    </source>
</reference>
<comment type="function">
    <text evidence="1">Synthesizes selenophosphate from selenide and ATP.</text>
</comment>
<comment type="catalytic activity">
    <reaction evidence="1">
        <text>hydrogenselenide + ATP + H2O = selenophosphate + AMP + phosphate + 2 H(+)</text>
        <dbReference type="Rhea" id="RHEA:18737"/>
        <dbReference type="ChEBI" id="CHEBI:15377"/>
        <dbReference type="ChEBI" id="CHEBI:15378"/>
        <dbReference type="ChEBI" id="CHEBI:16144"/>
        <dbReference type="ChEBI" id="CHEBI:29317"/>
        <dbReference type="ChEBI" id="CHEBI:30616"/>
        <dbReference type="ChEBI" id="CHEBI:43474"/>
        <dbReference type="ChEBI" id="CHEBI:456215"/>
        <dbReference type="EC" id="2.7.9.3"/>
    </reaction>
</comment>
<comment type="cofactor">
    <cofactor evidence="1">
        <name>Mg(2+)</name>
        <dbReference type="ChEBI" id="CHEBI:18420"/>
    </cofactor>
    <text evidence="1">Binds 1 Mg(2+) ion per monomer.</text>
</comment>
<comment type="subunit">
    <text evidence="1">Homodimer.</text>
</comment>
<comment type="similarity">
    <text evidence="1">Belongs to the selenophosphate synthase 1 family. Class I subfamily.</text>
</comment>
<geneLocation type="plasmid">
    <name>pSymA</name>
    <name>megaplasmid 1</name>
</geneLocation>
<gene>
    <name evidence="1" type="primary">selD</name>
    <name type="ordered locus">RA0014</name>
    <name type="ORF">SMa0028</name>
</gene>